<feature type="chain" id="PRO_0000156343" description="Probable inosine/xanthosine triphosphatase">
    <location>
        <begin position="1"/>
        <end position="170"/>
    </location>
</feature>
<feature type="binding site" evidence="1">
    <location>
        <position position="31"/>
    </location>
    <ligand>
        <name>Mg(2+)</name>
        <dbReference type="ChEBI" id="CHEBI:18420"/>
    </ligand>
</feature>
<reference key="1">
    <citation type="journal article" date="2002" name="Nucleic Acids Res.">
        <title>Genome sequence of Oceanobacillus iheyensis isolated from the Iheya Ridge and its unexpected adaptive capabilities to extreme environments.</title>
        <authorList>
            <person name="Takami H."/>
            <person name="Takaki Y."/>
            <person name="Uchiyama I."/>
        </authorList>
    </citation>
    <scope>NUCLEOTIDE SEQUENCE [LARGE SCALE GENOMIC DNA]</scope>
    <source>
        <strain>DSM 14371 / CIP 107618 / JCM 11309 / KCTC 3954 / HTE831</strain>
    </source>
</reference>
<accession>Q8EP79</accession>
<organism>
    <name type="scientific">Oceanobacillus iheyensis (strain DSM 14371 / CIP 107618 / JCM 11309 / KCTC 3954 / HTE831)</name>
    <dbReference type="NCBI Taxonomy" id="221109"/>
    <lineage>
        <taxon>Bacteria</taxon>
        <taxon>Bacillati</taxon>
        <taxon>Bacillota</taxon>
        <taxon>Bacilli</taxon>
        <taxon>Bacillales</taxon>
        <taxon>Bacillaceae</taxon>
        <taxon>Oceanobacillus</taxon>
    </lineage>
</organism>
<sequence>MQIQVGSQNPTKIQAVKEMFPNIDVIGVQAESGVSAQPFSDEETKLGAITRAKYCAMNNPYTIGVGLEGGVMYIDNELYLCNWGALVTPENDIITASGARIKIPNDVEEGLLKNIELGELMDTYAEKKDVSKKEGAIGIFTNQLITRKEMFRHVVTLLKGQWMLLNSNNH</sequence>
<keyword id="KW-0378">Hydrolase</keyword>
<keyword id="KW-0460">Magnesium</keyword>
<keyword id="KW-0464">Manganese</keyword>
<keyword id="KW-0479">Metal-binding</keyword>
<keyword id="KW-0546">Nucleotide metabolism</keyword>
<keyword id="KW-0547">Nucleotide-binding</keyword>
<keyword id="KW-1185">Reference proteome</keyword>
<dbReference type="EC" id="3.6.1.73" evidence="1"/>
<dbReference type="EMBL" id="BA000028">
    <property type="protein sequence ID" value="BAC14193.1"/>
    <property type="molecule type" value="Genomic_DNA"/>
</dbReference>
<dbReference type="RefSeq" id="WP_011066631.1">
    <property type="nucleotide sequence ID" value="NC_004193.1"/>
</dbReference>
<dbReference type="SMR" id="Q8EP79"/>
<dbReference type="STRING" id="221109.gene:10734485"/>
<dbReference type="KEGG" id="oih:OB2237"/>
<dbReference type="eggNOG" id="COG1986">
    <property type="taxonomic scope" value="Bacteria"/>
</dbReference>
<dbReference type="HOGENOM" id="CLU_087417_0_0_9"/>
<dbReference type="OrthoDB" id="164951at2"/>
<dbReference type="PhylomeDB" id="Q8EP79"/>
<dbReference type="Proteomes" id="UP000000822">
    <property type="component" value="Chromosome"/>
</dbReference>
<dbReference type="GO" id="GO:0103023">
    <property type="term" value="F:ITPase activity"/>
    <property type="evidence" value="ECO:0007669"/>
    <property type="project" value="UniProtKB-EC"/>
</dbReference>
<dbReference type="GO" id="GO:0046872">
    <property type="term" value="F:metal ion binding"/>
    <property type="evidence" value="ECO:0007669"/>
    <property type="project" value="UniProtKB-KW"/>
</dbReference>
<dbReference type="GO" id="GO:0000166">
    <property type="term" value="F:nucleotide binding"/>
    <property type="evidence" value="ECO:0007669"/>
    <property type="project" value="UniProtKB-KW"/>
</dbReference>
<dbReference type="GO" id="GO:0017111">
    <property type="term" value="F:ribonucleoside triphosphate phosphatase activity"/>
    <property type="evidence" value="ECO:0000250"/>
    <property type="project" value="UniProtKB"/>
</dbReference>
<dbReference type="GO" id="GO:0009117">
    <property type="term" value="P:nucleotide metabolic process"/>
    <property type="evidence" value="ECO:0007669"/>
    <property type="project" value="UniProtKB-KW"/>
</dbReference>
<dbReference type="Gene3D" id="3.90.950.10">
    <property type="match status" value="1"/>
</dbReference>
<dbReference type="HAMAP" id="MF_00648">
    <property type="entry name" value="Non_canon_purine_NTPase_YjjX"/>
    <property type="match status" value="1"/>
</dbReference>
<dbReference type="InterPro" id="IPR029001">
    <property type="entry name" value="ITPase-like_fam"/>
</dbReference>
<dbReference type="InterPro" id="IPR002786">
    <property type="entry name" value="Non_canon_purine_NTPase"/>
</dbReference>
<dbReference type="InterPro" id="IPR026533">
    <property type="entry name" value="NTPase/PRRC1"/>
</dbReference>
<dbReference type="InterPro" id="IPR050299">
    <property type="entry name" value="YjjX_NTPase"/>
</dbReference>
<dbReference type="NCBIfam" id="NF002850">
    <property type="entry name" value="PRK03114.1"/>
    <property type="match status" value="1"/>
</dbReference>
<dbReference type="PANTHER" id="PTHR34699">
    <property type="match status" value="1"/>
</dbReference>
<dbReference type="PANTHER" id="PTHR34699:SF2">
    <property type="entry name" value="NON-CANONICAL PURINE NTP PHOSPHATASE_PRRC1 DOMAIN-CONTAINING PROTEIN"/>
    <property type="match status" value="1"/>
</dbReference>
<dbReference type="Pfam" id="PF01931">
    <property type="entry name" value="NTPase_I-T"/>
    <property type="match status" value="1"/>
</dbReference>
<dbReference type="SUPFAM" id="SSF52972">
    <property type="entry name" value="ITPase-like"/>
    <property type="match status" value="1"/>
</dbReference>
<protein>
    <recommendedName>
        <fullName evidence="1">Probable inosine/xanthosine triphosphatase</fullName>
        <shortName evidence="1">ITPase/XTPase</shortName>
        <ecNumber evidence="1">3.6.1.73</ecNumber>
    </recommendedName>
    <alternativeName>
        <fullName evidence="1">Non-canonical purine NTP phosphatase</fullName>
    </alternativeName>
    <alternativeName>
        <fullName evidence="1">Non-standard purine NTP phosphatase</fullName>
    </alternativeName>
    <alternativeName>
        <fullName evidence="1">Nucleoside-triphosphate phosphatase</fullName>
        <shortName evidence="1">NTPase</shortName>
    </alternativeName>
</protein>
<evidence type="ECO:0000255" key="1">
    <source>
        <dbReference type="HAMAP-Rule" id="MF_00648"/>
    </source>
</evidence>
<name>NCPP_OCEIH</name>
<comment type="function">
    <text evidence="1">Phosphatase that hydrolyzes non-canonical purine nucleotides such as XTP and ITP to their respective diphosphate derivatives. Probably excludes non-canonical purines from DNA/RNA precursor pool, thus preventing their incorporation into DNA/RNA and avoiding chromosomal lesions.</text>
</comment>
<comment type="catalytic activity">
    <reaction evidence="1">
        <text>XTP + H2O = XDP + phosphate + H(+)</text>
        <dbReference type="Rhea" id="RHEA:28406"/>
        <dbReference type="ChEBI" id="CHEBI:15377"/>
        <dbReference type="ChEBI" id="CHEBI:15378"/>
        <dbReference type="ChEBI" id="CHEBI:43474"/>
        <dbReference type="ChEBI" id="CHEBI:59884"/>
        <dbReference type="ChEBI" id="CHEBI:61314"/>
        <dbReference type="EC" id="3.6.1.73"/>
    </reaction>
</comment>
<comment type="catalytic activity">
    <reaction evidence="1">
        <text>ITP + H2O = IDP + phosphate + H(+)</text>
        <dbReference type="Rhea" id="RHEA:28330"/>
        <dbReference type="ChEBI" id="CHEBI:15377"/>
        <dbReference type="ChEBI" id="CHEBI:15378"/>
        <dbReference type="ChEBI" id="CHEBI:43474"/>
        <dbReference type="ChEBI" id="CHEBI:58280"/>
        <dbReference type="ChEBI" id="CHEBI:61402"/>
        <dbReference type="EC" id="3.6.1.73"/>
    </reaction>
</comment>
<comment type="cofactor">
    <cofactor evidence="1">
        <name>Mg(2+)</name>
        <dbReference type="ChEBI" id="CHEBI:18420"/>
    </cofactor>
    <cofactor evidence="1">
        <name>Mn(2+)</name>
        <dbReference type="ChEBI" id="CHEBI:29035"/>
    </cofactor>
    <text evidence="1">Binds 1 divalent metal cation per subunit; can use either Mg(2+) or Mn(2+).</text>
</comment>
<comment type="subunit">
    <text evidence="1">Homodimer.</text>
</comment>
<comment type="similarity">
    <text evidence="1">Belongs to the YjjX NTPase family.</text>
</comment>
<proteinExistence type="inferred from homology"/>
<gene>
    <name type="ordered locus">OB2237</name>
</gene>